<protein>
    <recommendedName>
        <fullName>Catabolite control protein A</fullName>
    </recommendedName>
</protein>
<gene>
    <name type="primary">ccpA</name>
    <name type="ordered locus">SAR1814</name>
</gene>
<organism>
    <name type="scientific">Staphylococcus aureus (strain MRSA252)</name>
    <dbReference type="NCBI Taxonomy" id="282458"/>
    <lineage>
        <taxon>Bacteria</taxon>
        <taxon>Bacillati</taxon>
        <taxon>Bacillota</taxon>
        <taxon>Bacilli</taxon>
        <taxon>Bacillales</taxon>
        <taxon>Staphylococcaceae</taxon>
        <taxon>Staphylococcus</taxon>
    </lineage>
</organism>
<reference key="1">
    <citation type="journal article" date="2004" name="Proc. Natl. Acad. Sci. U.S.A.">
        <title>Complete genomes of two clinical Staphylococcus aureus strains: evidence for the rapid evolution of virulence and drug resistance.</title>
        <authorList>
            <person name="Holden M.T.G."/>
            <person name="Feil E.J."/>
            <person name="Lindsay J.A."/>
            <person name="Peacock S.J."/>
            <person name="Day N.P.J."/>
            <person name="Enright M.C."/>
            <person name="Foster T.J."/>
            <person name="Moore C.E."/>
            <person name="Hurst L."/>
            <person name="Atkin R."/>
            <person name="Barron A."/>
            <person name="Bason N."/>
            <person name="Bentley S.D."/>
            <person name="Chillingworth C."/>
            <person name="Chillingworth T."/>
            <person name="Churcher C."/>
            <person name="Clark L."/>
            <person name="Corton C."/>
            <person name="Cronin A."/>
            <person name="Doggett J."/>
            <person name="Dowd L."/>
            <person name="Feltwell T."/>
            <person name="Hance Z."/>
            <person name="Harris B."/>
            <person name="Hauser H."/>
            <person name="Holroyd S."/>
            <person name="Jagels K."/>
            <person name="James K.D."/>
            <person name="Lennard N."/>
            <person name="Line A."/>
            <person name="Mayes R."/>
            <person name="Moule S."/>
            <person name="Mungall K."/>
            <person name="Ormond D."/>
            <person name="Quail M.A."/>
            <person name="Rabbinowitsch E."/>
            <person name="Rutherford K.M."/>
            <person name="Sanders M."/>
            <person name="Sharp S."/>
            <person name="Simmonds M."/>
            <person name="Stevens K."/>
            <person name="Whitehead S."/>
            <person name="Barrell B.G."/>
            <person name="Spratt B.G."/>
            <person name="Parkhill J."/>
        </authorList>
    </citation>
    <scope>NUCLEOTIDE SEQUENCE [LARGE SCALE GENOMIC DNA]</scope>
    <source>
        <strain>MRSA252</strain>
    </source>
</reference>
<proteinExistence type="inferred from homology"/>
<accession>Q6GFX2</accession>
<evidence type="ECO:0000250" key="1"/>
<evidence type="ECO:0000255" key="2">
    <source>
        <dbReference type="PROSITE-ProRule" id="PRU00111"/>
    </source>
</evidence>
<feature type="chain" id="PRO_0000107929" description="Catabolite control protein A">
    <location>
        <begin position="1"/>
        <end position="329"/>
    </location>
</feature>
<feature type="domain" description="HTH lacI-type" evidence="2">
    <location>
        <begin position="1"/>
        <end position="57"/>
    </location>
</feature>
<feature type="DNA-binding region" description="H-T-H motif" evidence="2">
    <location>
        <begin position="5"/>
        <end position="24"/>
    </location>
</feature>
<sequence length="329" mass="36043">MTVTIYDVAREARVSMATVSRVVNGNQNVKAETKNKVNEVIKRLNYRPNAVARGLASKKTTTVGVIIPDISNIYYSQLARGLEDIAIMYKYHSIISNSDNDPEKEKEIFNNLLSKQVDGIIFLGGTITEEMKELINQSSVPVVVSGTNGKDAHIASVNIDFTEAAKEITGKLIEKGAKSFALVGGEHSKKAQEDVLAGLTEVLNKNSLQLGDTLNCSGAESYKEGVKAFAKMKGNLPDAILCISDEEAIGIMHSAMDAGIKVPEELQIISFNNTRLVEMVRPQLSSVIQPLYDIGAVGMRLLTKYMNDEKIEEPNVVLPHRIEYRGTTK</sequence>
<dbReference type="EMBL" id="BX571856">
    <property type="protein sequence ID" value="CAG40805.1"/>
    <property type="molecule type" value="Genomic_DNA"/>
</dbReference>
<dbReference type="RefSeq" id="WP_000219061.1">
    <property type="nucleotide sequence ID" value="NC_002952.2"/>
</dbReference>
<dbReference type="SMR" id="Q6GFX2"/>
<dbReference type="KEGG" id="sar:SAR1814"/>
<dbReference type="HOGENOM" id="CLU_037628_6_0_9"/>
<dbReference type="Proteomes" id="UP000000596">
    <property type="component" value="Chromosome"/>
</dbReference>
<dbReference type="GO" id="GO:0003700">
    <property type="term" value="F:DNA-binding transcription factor activity"/>
    <property type="evidence" value="ECO:0007669"/>
    <property type="project" value="TreeGrafter"/>
</dbReference>
<dbReference type="GO" id="GO:0000976">
    <property type="term" value="F:transcription cis-regulatory region binding"/>
    <property type="evidence" value="ECO:0007669"/>
    <property type="project" value="TreeGrafter"/>
</dbReference>
<dbReference type="CDD" id="cd01392">
    <property type="entry name" value="HTH_LacI"/>
    <property type="match status" value="1"/>
</dbReference>
<dbReference type="FunFam" id="1.10.260.40:FF:000002">
    <property type="entry name" value="HTH-type transcriptional repressor PurR"/>
    <property type="match status" value="1"/>
</dbReference>
<dbReference type="Gene3D" id="3.40.50.2300">
    <property type="match status" value="2"/>
</dbReference>
<dbReference type="Gene3D" id="1.10.260.40">
    <property type="entry name" value="lambda repressor-like DNA-binding domains"/>
    <property type="match status" value="1"/>
</dbReference>
<dbReference type="InterPro" id="IPR006377">
    <property type="entry name" value="CcpA"/>
</dbReference>
<dbReference type="InterPro" id="IPR000843">
    <property type="entry name" value="HTH_LacI"/>
</dbReference>
<dbReference type="InterPro" id="IPR046335">
    <property type="entry name" value="LacI/GalR-like_sensor"/>
</dbReference>
<dbReference type="InterPro" id="IPR010982">
    <property type="entry name" value="Lambda_DNA-bd_dom_sf"/>
</dbReference>
<dbReference type="InterPro" id="IPR028082">
    <property type="entry name" value="Peripla_BP_I"/>
</dbReference>
<dbReference type="NCBIfam" id="TIGR01481">
    <property type="entry name" value="ccpA"/>
    <property type="match status" value="1"/>
</dbReference>
<dbReference type="PANTHER" id="PTHR30146:SF150">
    <property type="entry name" value="ARABINOSE METABOLISM TRANSCRIPTIONAL REPRESSOR"/>
    <property type="match status" value="1"/>
</dbReference>
<dbReference type="PANTHER" id="PTHR30146">
    <property type="entry name" value="LACI-RELATED TRANSCRIPTIONAL REPRESSOR"/>
    <property type="match status" value="1"/>
</dbReference>
<dbReference type="Pfam" id="PF00356">
    <property type="entry name" value="LacI"/>
    <property type="match status" value="1"/>
</dbReference>
<dbReference type="Pfam" id="PF13377">
    <property type="entry name" value="Peripla_BP_3"/>
    <property type="match status" value="1"/>
</dbReference>
<dbReference type="PRINTS" id="PR00036">
    <property type="entry name" value="HTHLACI"/>
</dbReference>
<dbReference type="SMART" id="SM00354">
    <property type="entry name" value="HTH_LACI"/>
    <property type="match status" value="1"/>
</dbReference>
<dbReference type="SUPFAM" id="SSF47413">
    <property type="entry name" value="lambda repressor-like DNA-binding domains"/>
    <property type="match status" value="1"/>
</dbReference>
<dbReference type="SUPFAM" id="SSF53822">
    <property type="entry name" value="Periplasmic binding protein-like I"/>
    <property type="match status" value="1"/>
</dbReference>
<dbReference type="PROSITE" id="PS00356">
    <property type="entry name" value="HTH_LACI_1"/>
    <property type="match status" value="1"/>
</dbReference>
<dbReference type="PROSITE" id="PS50932">
    <property type="entry name" value="HTH_LACI_2"/>
    <property type="match status" value="1"/>
</dbReference>
<comment type="function">
    <text evidence="1">Global transcriptional regulator of carbon catabolite repression (CCR) and carbon catabolite activation (CCA), which ensures optimal energy usage under diverse conditions.</text>
</comment>
<keyword id="KW-0010">Activator</keyword>
<keyword id="KW-0238">DNA-binding</keyword>
<keyword id="KW-0678">Repressor</keyword>
<keyword id="KW-0804">Transcription</keyword>
<keyword id="KW-0805">Transcription regulation</keyword>
<name>CCPA_STAAR</name>